<feature type="chain" id="PRO_1000143608" description="NAD(P)H-quinone oxidoreductase subunit 1">
    <location>
        <begin position="1"/>
        <end position="372"/>
    </location>
</feature>
<feature type="transmembrane region" description="Helical" evidence="1">
    <location>
        <begin position="27"/>
        <end position="47"/>
    </location>
</feature>
<feature type="transmembrane region" description="Helical" evidence="1">
    <location>
        <begin position="97"/>
        <end position="117"/>
    </location>
</feature>
<feature type="transmembrane region" description="Helical" evidence="1">
    <location>
        <begin position="128"/>
        <end position="148"/>
    </location>
</feature>
<feature type="transmembrane region" description="Helical" evidence="1">
    <location>
        <begin position="166"/>
        <end position="186"/>
    </location>
</feature>
<feature type="transmembrane region" description="Helical" evidence="1">
    <location>
        <begin position="204"/>
        <end position="224"/>
    </location>
</feature>
<feature type="transmembrane region" description="Helical" evidence="1">
    <location>
        <begin position="249"/>
        <end position="269"/>
    </location>
</feature>
<feature type="transmembrane region" description="Helical" evidence="1">
    <location>
        <begin position="308"/>
        <end position="328"/>
    </location>
</feature>
<feature type="transmembrane region" description="Helical" evidence="1">
    <location>
        <begin position="351"/>
        <end position="371"/>
    </location>
</feature>
<dbReference type="EC" id="7.1.1.-" evidence="1"/>
<dbReference type="EMBL" id="CP001037">
    <property type="protein sequence ID" value="ACC83929.1"/>
    <property type="molecule type" value="Genomic_DNA"/>
</dbReference>
<dbReference type="RefSeq" id="WP_012411872.1">
    <property type="nucleotide sequence ID" value="NC_010628.1"/>
</dbReference>
<dbReference type="SMR" id="B2J7W4"/>
<dbReference type="STRING" id="63737.Npun_R5626"/>
<dbReference type="EnsemblBacteria" id="ACC83929">
    <property type="protein sequence ID" value="ACC83929"/>
    <property type="gene ID" value="Npun_R5626"/>
</dbReference>
<dbReference type="KEGG" id="npu:Npun_R5626"/>
<dbReference type="eggNOG" id="COG1005">
    <property type="taxonomic scope" value="Bacteria"/>
</dbReference>
<dbReference type="HOGENOM" id="CLU_015134_0_1_3"/>
<dbReference type="OrthoDB" id="9803734at2"/>
<dbReference type="PhylomeDB" id="B2J7W4"/>
<dbReference type="Proteomes" id="UP000001191">
    <property type="component" value="Chromosome"/>
</dbReference>
<dbReference type="GO" id="GO:0031676">
    <property type="term" value="C:plasma membrane-derived thylakoid membrane"/>
    <property type="evidence" value="ECO:0007669"/>
    <property type="project" value="UniProtKB-SubCell"/>
</dbReference>
<dbReference type="GO" id="GO:0003954">
    <property type="term" value="F:NADH dehydrogenase activity"/>
    <property type="evidence" value="ECO:0007669"/>
    <property type="project" value="TreeGrafter"/>
</dbReference>
<dbReference type="GO" id="GO:0016655">
    <property type="term" value="F:oxidoreductase activity, acting on NAD(P)H, quinone or similar compound as acceptor"/>
    <property type="evidence" value="ECO:0007669"/>
    <property type="project" value="UniProtKB-UniRule"/>
</dbReference>
<dbReference type="GO" id="GO:0048038">
    <property type="term" value="F:quinone binding"/>
    <property type="evidence" value="ECO:0007669"/>
    <property type="project" value="UniProtKB-KW"/>
</dbReference>
<dbReference type="GO" id="GO:0009060">
    <property type="term" value="P:aerobic respiration"/>
    <property type="evidence" value="ECO:0007669"/>
    <property type="project" value="TreeGrafter"/>
</dbReference>
<dbReference type="GO" id="GO:0019684">
    <property type="term" value="P:photosynthesis, light reaction"/>
    <property type="evidence" value="ECO:0007669"/>
    <property type="project" value="UniProtKB-UniRule"/>
</dbReference>
<dbReference type="HAMAP" id="MF_01350">
    <property type="entry name" value="NDH1_NuoH"/>
    <property type="match status" value="1"/>
</dbReference>
<dbReference type="InterPro" id="IPR001694">
    <property type="entry name" value="NADH_UbQ_OxRdtase_su1/FPO"/>
</dbReference>
<dbReference type="InterPro" id="IPR018086">
    <property type="entry name" value="NADH_UbQ_OxRdtase_su1_CS"/>
</dbReference>
<dbReference type="NCBIfam" id="NF004741">
    <property type="entry name" value="PRK06076.1-2"/>
    <property type="match status" value="1"/>
</dbReference>
<dbReference type="NCBIfam" id="NF004744">
    <property type="entry name" value="PRK06076.1-5"/>
    <property type="match status" value="1"/>
</dbReference>
<dbReference type="PANTHER" id="PTHR11432">
    <property type="entry name" value="NADH DEHYDROGENASE SUBUNIT 1"/>
    <property type="match status" value="1"/>
</dbReference>
<dbReference type="PANTHER" id="PTHR11432:SF3">
    <property type="entry name" value="NADH-UBIQUINONE OXIDOREDUCTASE CHAIN 1"/>
    <property type="match status" value="1"/>
</dbReference>
<dbReference type="Pfam" id="PF00146">
    <property type="entry name" value="NADHdh"/>
    <property type="match status" value="1"/>
</dbReference>
<dbReference type="PROSITE" id="PS00668">
    <property type="entry name" value="COMPLEX1_ND1_2"/>
    <property type="match status" value="1"/>
</dbReference>
<gene>
    <name evidence="1" type="primary">ndhA</name>
    <name type="ordered locus">Npun_R5626</name>
</gene>
<sequence>MNSGIDLQGTFIESLRDLGIPAGTAKAIWMPLPMILMLIGATVGVLVATWLERKISASAQQRIGPEYQGPFGLLVPVADGLKLVFKEDIVPAKSDPWLFTLGPIIVVIPVFLSFLIVPFGQNIVISNVGMGVFLWIALSSIQPIGLLMAGYASNNKYSLLGGLRAAAQSISYEIPLALAVLAIAMMSNSLSTVDIVNQQSGYGILGWNIWRQPIGFLIFWIAALAECERLPFDLPEAEEEIVAGYQTEYSGMKFGLFYLGSYVNLILSSLLVAILYLGGWDFPIPLNLIAGWLGVSELNPVFQIITASLGITMTVFKAYLLVFVAILLRWTVPRVRIDQLLDLGWKFLLPVGLVNLLLTAALKLAFPFAFGG</sequence>
<evidence type="ECO:0000255" key="1">
    <source>
        <dbReference type="HAMAP-Rule" id="MF_01350"/>
    </source>
</evidence>
<proteinExistence type="inferred from homology"/>
<keyword id="KW-0472">Membrane</keyword>
<keyword id="KW-0520">NAD</keyword>
<keyword id="KW-0521">NADP</keyword>
<keyword id="KW-0618">Plastoquinone</keyword>
<keyword id="KW-0874">Quinone</keyword>
<keyword id="KW-1185">Reference proteome</keyword>
<keyword id="KW-0793">Thylakoid</keyword>
<keyword id="KW-1278">Translocase</keyword>
<keyword id="KW-0812">Transmembrane</keyword>
<keyword id="KW-1133">Transmembrane helix</keyword>
<organism>
    <name type="scientific">Nostoc punctiforme (strain ATCC 29133 / PCC 73102)</name>
    <dbReference type="NCBI Taxonomy" id="63737"/>
    <lineage>
        <taxon>Bacteria</taxon>
        <taxon>Bacillati</taxon>
        <taxon>Cyanobacteriota</taxon>
        <taxon>Cyanophyceae</taxon>
        <taxon>Nostocales</taxon>
        <taxon>Nostocaceae</taxon>
        <taxon>Nostoc</taxon>
    </lineage>
</organism>
<name>NU1C_NOSP7</name>
<comment type="function">
    <text evidence="1">NDH-1 shuttles electrons from an unknown electron donor, via FMN and iron-sulfur (Fe-S) centers, to quinones in the respiratory and/or the photosynthetic chain. The immediate electron acceptor for the enzyme in this species is believed to be plastoquinone. Couples the redox reaction to proton translocation, and thus conserves the redox energy in a proton gradient.</text>
</comment>
<comment type="catalytic activity">
    <reaction evidence="1">
        <text>a plastoquinone + NADH + (n+1) H(+)(in) = a plastoquinol + NAD(+) + n H(+)(out)</text>
        <dbReference type="Rhea" id="RHEA:42608"/>
        <dbReference type="Rhea" id="RHEA-COMP:9561"/>
        <dbReference type="Rhea" id="RHEA-COMP:9562"/>
        <dbReference type="ChEBI" id="CHEBI:15378"/>
        <dbReference type="ChEBI" id="CHEBI:17757"/>
        <dbReference type="ChEBI" id="CHEBI:57540"/>
        <dbReference type="ChEBI" id="CHEBI:57945"/>
        <dbReference type="ChEBI" id="CHEBI:62192"/>
    </reaction>
</comment>
<comment type="catalytic activity">
    <reaction evidence="1">
        <text>a plastoquinone + NADPH + (n+1) H(+)(in) = a plastoquinol + NADP(+) + n H(+)(out)</text>
        <dbReference type="Rhea" id="RHEA:42612"/>
        <dbReference type="Rhea" id="RHEA-COMP:9561"/>
        <dbReference type="Rhea" id="RHEA-COMP:9562"/>
        <dbReference type="ChEBI" id="CHEBI:15378"/>
        <dbReference type="ChEBI" id="CHEBI:17757"/>
        <dbReference type="ChEBI" id="CHEBI:57783"/>
        <dbReference type="ChEBI" id="CHEBI:58349"/>
        <dbReference type="ChEBI" id="CHEBI:62192"/>
    </reaction>
</comment>
<comment type="subunit">
    <text evidence="1">NDH-1 is composed of at least 11 different subunits.</text>
</comment>
<comment type="subcellular location">
    <subcellularLocation>
        <location evidence="1">Cellular thylakoid membrane</location>
        <topology evidence="1">Multi-pass membrane protein</topology>
    </subcellularLocation>
</comment>
<comment type="similarity">
    <text evidence="1">Belongs to the complex I subunit 1 family.</text>
</comment>
<accession>B2J7W4</accession>
<protein>
    <recommendedName>
        <fullName evidence="1">NAD(P)H-quinone oxidoreductase subunit 1</fullName>
        <ecNumber evidence="1">7.1.1.-</ecNumber>
    </recommendedName>
    <alternativeName>
        <fullName evidence="1">NAD(P)H dehydrogenase I subunit 1</fullName>
    </alternativeName>
    <alternativeName>
        <fullName evidence="1">NDH-1 subunit 1</fullName>
    </alternativeName>
    <alternativeName>
        <fullName evidence="1">NDH-A</fullName>
    </alternativeName>
</protein>
<reference key="1">
    <citation type="journal article" date="2013" name="Plant Physiol.">
        <title>A Nostoc punctiforme Sugar Transporter Necessary to Establish a Cyanobacterium-Plant Symbiosis.</title>
        <authorList>
            <person name="Ekman M."/>
            <person name="Picossi S."/>
            <person name="Campbell E.L."/>
            <person name="Meeks J.C."/>
            <person name="Flores E."/>
        </authorList>
    </citation>
    <scope>NUCLEOTIDE SEQUENCE [LARGE SCALE GENOMIC DNA]</scope>
    <source>
        <strain>ATCC 29133 / PCC 73102</strain>
    </source>
</reference>